<dbReference type="EMBL" id="CP000390">
    <property type="protein sequence ID" value="ABG62403.1"/>
    <property type="molecule type" value="Genomic_DNA"/>
</dbReference>
<dbReference type="STRING" id="266779.Meso_1006"/>
<dbReference type="KEGG" id="mes:Meso_1006"/>
<dbReference type="eggNOG" id="COG0759">
    <property type="taxonomic scope" value="Bacteria"/>
</dbReference>
<dbReference type="HOGENOM" id="CLU_144811_0_1_5"/>
<dbReference type="OrthoDB" id="9801753at2"/>
<dbReference type="GO" id="GO:0005886">
    <property type="term" value="C:plasma membrane"/>
    <property type="evidence" value="ECO:0007669"/>
    <property type="project" value="UniProtKB-SubCell"/>
</dbReference>
<dbReference type="HAMAP" id="MF_00386">
    <property type="entry name" value="UPF0161_YidD"/>
    <property type="match status" value="1"/>
</dbReference>
<dbReference type="InterPro" id="IPR002696">
    <property type="entry name" value="Membr_insert_effic_factor_YidD"/>
</dbReference>
<dbReference type="NCBIfam" id="TIGR00278">
    <property type="entry name" value="membrane protein insertion efficiency factor YidD"/>
    <property type="match status" value="1"/>
</dbReference>
<dbReference type="PANTHER" id="PTHR33383">
    <property type="entry name" value="MEMBRANE PROTEIN INSERTION EFFICIENCY FACTOR-RELATED"/>
    <property type="match status" value="1"/>
</dbReference>
<dbReference type="PANTHER" id="PTHR33383:SF1">
    <property type="entry name" value="MEMBRANE PROTEIN INSERTION EFFICIENCY FACTOR-RELATED"/>
    <property type="match status" value="1"/>
</dbReference>
<dbReference type="Pfam" id="PF01809">
    <property type="entry name" value="YidD"/>
    <property type="match status" value="1"/>
</dbReference>
<dbReference type="SMART" id="SM01234">
    <property type="entry name" value="Haemolytic"/>
    <property type="match status" value="1"/>
</dbReference>
<gene>
    <name type="ordered locus">Meso_1006</name>
</gene>
<protein>
    <recommendedName>
        <fullName evidence="1">Putative membrane protein insertion efficiency factor</fullName>
    </recommendedName>
</protein>
<organism>
    <name type="scientific">Chelativorans sp. (strain BNC1)</name>
    <dbReference type="NCBI Taxonomy" id="266779"/>
    <lineage>
        <taxon>Bacteria</taxon>
        <taxon>Pseudomonadati</taxon>
        <taxon>Pseudomonadota</taxon>
        <taxon>Alphaproteobacteria</taxon>
        <taxon>Hyphomicrobiales</taxon>
        <taxon>Phyllobacteriaceae</taxon>
        <taxon>Chelativorans</taxon>
    </lineage>
</organism>
<proteinExistence type="inferred from homology"/>
<evidence type="ECO:0000255" key="1">
    <source>
        <dbReference type="HAMAP-Rule" id="MF_00386"/>
    </source>
</evidence>
<keyword id="KW-0997">Cell inner membrane</keyword>
<keyword id="KW-1003">Cell membrane</keyword>
<keyword id="KW-0472">Membrane</keyword>
<comment type="function">
    <text evidence="1">Could be involved in insertion of integral membrane proteins into the membrane.</text>
</comment>
<comment type="subcellular location">
    <subcellularLocation>
        <location evidence="1">Cell inner membrane</location>
        <topology evidence="1">Peripheral membrane protein</topology>
        <orientation evidence="1">Cytoplasmic side</orientation>
    </subcellularLocation>
</comment>
<comment type="similarity">
    <text evidence="1">Belongs to the UPF0161 family.</text>
</comment>
<accession>Q11JM2</accession>
<feature type="chain" id="PRO_0000253124" description="Putative membrane protein insertion efficiency factor">
    <location>
        <begin position="1"/>
        <end position="108"/>
    </location>
</feature>
<reference key="1">
    <citation type="submission" date="2006-06" db="EMBL/GenBank/DDBJ databases">
        <title>Complete sequence of chromosome of Mesorhizobium sp. BNC1.</title>
        <authorList>
            <consortium name="US DOE Joint Genome Institute"/>
            <person name="Copeland A."/>
            <person name="Lucas S."/>
            <person name="Lapidus A."/>
            <person name="Barry K."/>
            <person name="Detter J.C."/>
            <person name="Glavina del Rio T."/>
            <person name="Hammon N."/>
            <person name="Israni S."/>
            <person name="Dalin E."/>
            <person name="Tice H."/>
            <person name="Pitluck S."/>
            <person name="Chertkov O."/>
            <person name="Brettin T."/>
            <person name="Bruce D."/>
            <person name="Han C."/>
            <person name="Tapia R."/>
            <person name="Gilna P."/>
            <person name="Schmutz J."/>
            <person name="Larimer F."/>
            <person name="Land M."/>
            <person name="Hauser L."/>
            <person name="Kyrpides N."/>
            <person name="Mikhailova N."/>
            <person name="Richardson P."/>
        </authorList>
    </citation>
    <scope>NUCLEOTIDE SEQUENCE [LARGE SCALE GENOMIC DNA]</scope>
    <source>
        <strain>BNC1</strain>
    </source>
</reference>
<sequence length="108" mass="12187">MALPAGYSRNWSGPWPKTPGRVLGTAFVRLYQLTLSGFIGNSCRHFPTCSEYAYEAIARHGLWAGGWMGLFRVMHCGPGGTHGIDPVPEILQPRHAWWAPWRLWKLKP</sequence>
<name>YIDD_CHESB</name>